<dbReference type="EC" id="4.2.1.19" evidence="1"/>
<dbReference type="EMBL" id="CP001403">
    <property type="protein sequence ID" value="ACP45803.1"/>
    <property type="molecule type" value="Genomic_DNA"/>
</dbReference>
<dbReference type="RefSeq" id="WP_012716214.1">
    <property type="nucleotide sequence ID" value="NC_012622.1"/>
</dbReference>
<dbReference type="SMR" id="C3NER4"/>
<dbReference type="GeneID" id="7808025"/>
<dbReference type="KEGG" id="siy:YG5714_1541"/>
<dbReference type="HOGENOM" id="CLU_044308_3_0_2"/>
<dbReference type="UniPathway" id="UPA00031">
    <property type="reaction ID" value="UER00011"/>
</dbReference>
<dbReference type="Proteomes" id="UP000002308">
    <property type="component" value="Chromosome"/>
</dbReference>
<dbReference type="GO" id="GO:0005737">
    <property type="term" value="C:cytoplasm"/>
    <property type="evidence" value="ECO:0007669"/>
    <property type="project" value="UniProtKB-SubCell"/>
</dbReference>
<dbReference type="GO" id="GO:0004424">
    <property type="term" value="F:imidazoleglycerol-phosphate dehydratase activity"/>
    <property type="evidence" value="ECO:0007669"/>
    <property type="project" value="UniProtKB-UniRule"/>
</dbReference>
<dbReference type="GO" id="GO:0000105">
    <property type="term" value="P:L-histidine biosynthetic process"/>
    <property type="evidence" value="ECO:0007669"/>
    <property type="project" value="UniProtKB-UniRule"/>
</dbReference>
<dbReference type="CDD" id="cd07914">
    <property type="entry name" value="IGPD"/>
    <property type="match status" value="1"/>
</dbReference>
<dbReference type="FunFam" id="3.30.230.40:FF:000001">
    <property type="entry name" value="Imidazoleglycerol-phosphate dehydratase HisB"/>
    <property type="match status" value="1"/>
</dbReference>
<dbReference type="FunFam" id="3.30.230.40:FF:000003">
    <property type="entry name" value="Imidazoleglycerol-phosphate dehydratase HisB"/>
    <property type="match status" value="1"/>
</dbReference>
<dbReference type="Gene3D" id="3.30.230.40">
    <property type="entry name" value="Imidazole glycerol phosphate dehydratase, domain 1"/>
    <property type="match status" value="2"/>
</dbReference>
<dbReference type="HAMAP" id="MF_00076">
    <property type="entry name" value="HisB"/>
    <property type="match status" value="1"/>
</dbReference>
<dbReference type="InterPro" id="IPR038494">
    <property type="entry name" value="IGPD_sf"/>
</dbReference>
<dbReference type="InterPro" id="IPR000807">
    <property type="entry name" value="ImidazoleglycerolP_deHydtase"/>
</dbReference>
<dbReference type="InterPro" id="IPR020565">
    <property type="entry name" value="ImidazoleglycerP_deHydtase_CS"/>
</dbReference>
<dbReference type="InterPro" id="IPR020568">
    <property type="entry name" value="Ribosomal_Su5_D2-typ_SF"/>
</dbReference>
<dbReference type="NCBIfam" id="NF002114">
    <property type="entry name" value="PRK00951.2-4"/>
    <property type="match status" value="1"/>
</dbReference>
<dbReference type="NCBIfam" id="NF010121">
    <property type="entry name" value="PRK13598.1"/>
    <property type="match status" value="1"/>
</dbReference>
<dbReference type="PANTHER" id="PTHR23133:SF2">
    <property type="entry name" value="IMIDAZOLEGLYCEROL-PHOSPHATE DEHYDRATASE"/>
    <property type="match status" value="1"/>
</dbReference>
<dbReference type="PANTHER" id="PTHR23133">
    <property type="entry name" value="IMIDAZOLEGLYCEROL-PHOSPHATE DEHYDRATASE HIS7"/>
    <property type="match status" value="1"/>
</dbReference>
<dbReference type="Pfam" id="PF00475">
    <property type="entry name" value="IGPD"/>
    <property type="match status" value="1"/>
</dbReference>
<dbReference type="SUPFAM" id="SSF54211">
    <property type="entry name" value="Ribosomal protein S5 domain 2-like"/>
    <property type="match status" value="2"/>
</dbReference>
<dbReference type="PROSITE" id="PS00954">
    <property type="entry name" value="IGP_DEHYDRATASE_1"/>
    <property type="match status" value="1"/>
</dbReference>
<dbReference type="PROSITE" id="PS00955">
    <property type="entry name" value="IGP_DEHYDRATASE_2"/>
    <property type="match status" value="1"/>
</dbReference>
<feature type="chain" id="PRO_1000202523" description="Imidazoleglycerol-phosphate dehydratase">
    <location>
        <begin position="1"/>
        <end position="193"/>
    </location>
</feature>
<reference key="1">
    <citation type="journal article" date="2009" name="Proc. Natl. Acad. Sci. U.S.A.">
        <title>Biogeography of the Sulfolobus islandicus pan-genome.</title>
        <authorList>
            <person name="Reno M.L."/>
            <person name="Held N.L."/>
            <person name="Fields C.J."/>
            <person name="Burke P.V."/>
            <person name="Whitaker R.J."/>
        </authorList>
    </citation>
    <scope>NUCLEOTIDE SEQUENCE [LARGE SCALE GENOMIC DNA]</scope>
    <source>
        <strain>Y.G.57.14 / Yellowstone #1</strain>
    </source>
</reference>
<protein>
    <recommendedName>
        <fullName evidence="1">Imidazoleglycerol-phosphate dehydratase</fullName>
        <shortName evidence="1">IGPD</shortName>
        <ecNumber evidence="1">4.2.1.19</ecNumber>
    </recommendedName>
</protein>
<sequence length="193" mass="21527">MARNANITRETKETKIEVFLDIDRKGEIKISTPVPFFNHMLITLLTYMNSTATVSATDKLPYDDHHIIEDVAITLGLAIKEALGDKRGIKRFSHQIIPMDEALVLVSLDISNRGMAFVSLNLRRSEIGGLATENIPHFFQSFAYNSGVTLHISQLSGYNTHHIIEASFKALGLALYEATRIVDNEIRSTKGVI</sequence>
<comment type="catalytic activity">
    <reaction evidence="1">
        <text>D-erythro-1-(imidazol-4-yl)glycerol 3-phosphate = 3-(imidazol-4-yl)-2-oxopropyl phosphate + H2O</text>
        <dbReference type="Rhea" id="RHEA:11040"/>
        <dbReference type="ChEBI" id="CHEBI:15377"/>
        <dbReference type="ChEBI" id="CHEBI:57766"/>
        <dbReference type="ChEBI" id="CHEBI:58278"/>
        <dbReference type="EC" id="4.2.1.19"/>
    </reaction>
</comment>
<comment type="pathway">
    <text evidence="1">Amino-acid biosynthesis; L-histidine biosynthesis; L-histidine from 5-phospho-alpha-D-ribose 1-diphosphate: step 6/9.</text>
</comment>
<comment type="subcellular location">
    <subcellularLocation>
        <location evidence="1">Cytoplasm</location>
    </subcellularLocation>
</comment>
<comment type="similarity">
    <text evidence="1">Belongs to the imidazoleglycerol-phosphate dehydratase family.</text>
</comment>
<proteinExistence type="inferred from homology"/>
<name>HIS7_SACI7</name>
<evidence type="ECO:0000255" key="1">
    <source>
        <dbReference type="HAMAP-Rule" id="MF_00076"/>
    </source>
</evidence>
<accession>C3NER4</accession>
<organism>
    <name type="scientific">Saccharolobus islandicus (strain Y.G.57.14 / Yellowstone #1)</name>
    <name type="common">Sulfolobus islandicus</name>
    <dbReference type="NCBI Taxonomy" id="439386"/>
    <lineage>
        <taxon>Archaea</taxon>
        <taxon>Thermoproteota</taxon>
        <taxon>Thermoprotei</taxon>
        <taxon>Sulfolobales</taxon>
        <taxon>Sulfolobaceae</taxon>
        <taxon>Saccharolobus</taxon>
    </lineage>
</organism>
<gene>
    <name evidence="1" type="primary">hisB</name>
    <name type="ordered locus">YG5714_1541</name>
</gene>
<keyword id="KW-0028">Amino-acid biosynthesis</keyword>
<keyword id="KW-0963">Cytoplasm</keyword>
<keyword id="KW-0368">Histidine biosynthesis</keyword>
<keyword id="KW-0456">Lyase</keyword>